<sequence length="401" mass="43849">MIYPGRGASLSVAVALVLFSSGAPWTFREEKEDVDREVCSESKIATTKYPCVKSTGEVTTCYRKKCCEGFKFVLGQCIPEDYDVCAGAPCEQQCTDHFGRVVCTCYDGYRYDRERHRNREKPYCLDIDECANNNETVCSQMCVNTPGSYRCDCHSGFYLEDDGKTCTKGERAPLFEKSDNVMKEGTCSATCEDFHQMKMTVLQLKQKMSLLSSNTEINKQMTNEKMMMTTNSFLPGPPGPPGPAGTPGAKGSSGSPGQMGPPGLPGPRGDMGPIGPSPDLSHIKQGRRGPVGPPGAPGRDGMKGERGFPGPSGPPGPPGSFDFLLLMMADIRNDIAELQSKVFSRPLHSSFEDFPSAPDSWRDTPENLDFGSGEDYKSQSPPKSSRKRKLPRNLKNPDWPV</sequence>
<keyword id="KW-0037">Angiogenesis</keyword>
<keyword id="KW-0106">Calcium</keyword>
<keyword id="KW-0176">Collagen</keyword>
<keyword id="KW-0217">Developmental protein</keyword>
<keyword id="KW-1015">Disulfide bond</keyword>
<keyword id="KW-0245">EGF-like domain</keyword>
<keyword id="KW-0325">Glycoprotein</keyword>
<keyword id="KW-1185">Reference proteome</keyword>
<keyword id="KW-0677">Repeat</keyword>
<keyword id="KW-0964">Secreted</keyword>
<keyword id="KW-0732">Signal</keyword>
<feature type="signal peptide" evidence="1">
    <location>
        <begin position="1"/>
        <end position="22"/>
    </location>
</feature>
<feature type="chain" id="PRO_0000370636" description="Collagen and calcium-binding EGF domain-containing protein 1">
    <location>
        <begin position="23"/>
        <end position="401"/>
    </location>
</feature>
<feature type="domain" description="EGF-like; calcium-binding" evidence="2">
    <location>
        <begin position="126"/>
        <end position="167"/>
    </location>
</feature>
<feature type="domain" description="Collagen-like 1">
    <location>
        <begin position="234"/>
        <end position="276"/>
    </location>
</feature>
<feature type="domain" description="Collagen-like 2">
    <location>
        <begin position="286"/>
        <end position="319"/>
    </location>
</feature>
<feature type="region of interest" description="Disordered" evidence="3">
    <location>
        <begin position="229"/>
        <end position="321"/>
    </location>
</feature>
<feature type="region of interest" description="Disordered" evidence="3">
    <location>
        <begin position="344"/>
        <end position="401"/>
    </location>
</feature>
<feature type="compositionally biased region" description="Pro residues" evidence="3">
    <location>
        <begin position="235"/>
        <end position="244"/>
    </location>
</feature>
<feature type="compositionally biased region" description="Low complexity" evidence="3">
    <location>
        <begin position="246"/>
        <end position="258"/>
    </location>
</feature>
<feature type="glycosylation site" description="N-linked (GlcNAc...) asparagine" evidence="1">
    <location>
        <position position="134"/>
    </location>
</feature>
<feature type="disulfide bond" evidence="2">
    <location>
        <begin position="130"/>
        <end position="142"/>
    </location>
</feature>
<feature type="disulfide bond" evidence="2">
    <location>
        <begin position="138"/>
        <end position="151"/>
    </location>
</feature>
<feature type="disulfide bond" evidence="2">
    <location>
        <begin position="153"/>
        <end position="166"/>
    </location>
</feature>
<feature type="mutagenesis site" description="In fof(hu3613); lacks the thoracic duct and the previously unidentified intersegmental (ISLVs) and dorsal longitudinal lymphatic vessels (DLLVs) but retains a seemingly normal blood vasculature. Mutants show edema, initiating in the lower intestine and around the eyes from 6 dpf. At 36 dpf, surviving mutants show severe edema." evidence="4">
    <original>D</original>
    <variation>E</variation>
    <location>
        <position position="162"/>
    </location>
</feature>
<accession>A8WGB1</accession>
<proteinExistence type="evidence at protein level"/>
<evidence type="ECO:0000255" key="1"/>
<evidence type="ECO:0000255" key="2">
    <source>
        <dbReference type="PROSITE-ProRule" id="PRU00076"/>
    </source>
</evidence>
<evidence type="ECO:0000256" key="3">
    <source>
        <dbReference type="SAM" id="MobiDB-lite"/>
    </source>
</evidence>
<evidence type="ECO:0000269" key="4">
    <source>
    </source>
</evidence>
<evidence type="ECO:0000269" key="5">
    <source>
    </source>
</evidence>
<evidence type="ECO:0000269" key="6">
    <source>
    </source>
</evidence>
<evidence type="ECO:0000305" key="7"/>
<gene>
    <name type="primary">ccbe1</name>
    <name type="synonym">fof</name>
</gene>
<name>CCBE1_DANRE</name>
<organism>
    <name type="scientific">Danio rerio</name>
    <name type="common">Zebrafish</name>
    <name type="synonym">Brachydanio rerio</name>
    <dbReference type="NCBI Taxonomy" id="7955"/>
    <lineage>
        <taxon>Eukaryota</taxon>
        <taxon>Metazoa</taxon>
        <taxon>Chordata</taxon>
        <taxon>Craniata</taxon>
        <taxon>Vertebrata</taxon>
        <taxon>Euteleostomi</taxon>
        <taxon>Actinopterygii</taxon>
        <taxon>Neopterygii</taxon>
        <taxon>Teleostei</taxon>
        <taxon>Ostariophysi</taxon>
        <taxon>Cypriniformes</taxon>
        <taxon>Danionidae</taxon>
        <taxon>Danioninae</taxon>
        <taxon>Danio</taxon>
    </lineage>
</organism>
<comment type="function">
    <text evidence="4 6">Required for lymphangioblast budding and angiogenic sprouting from venous endothelium during embryogenesis. Required for the formation of facial lymphatic structures (PubMed:37097004). Necessary for lymphangiogenesis, but is probably not part of either the vegfc-vegfr3 signaling or sox18-prox1 transcriptional pathways.</text>
</comment>
<comment type="subcellular location">
    <subcellularLocation>
        <location evidence="7">Secreted</location>
    </subcellularLocation>
</comment>
<comment type="tissue specificity">
    <text evidence="4">Not expressed in blood or lymphatic endothelial cells, correlating spatially and temporally with the migration routes of endothelial cells that bud from the PCV, migrate in association with somite boundaries and seed the horizontal myoseptum region from where lymphatic precursors later migrate.</text>
</comment>
<comment type="developmental stage">
    <text evidence="4">Restricted expression during development with expression in the pronephros and ventral mesenchyme at 24 hours post fertilization (hpf). By 36 hpf, expression is detected in discrete zones along each somitic boundary, between the PCV and the horizontal myoseptum, as well as along the horizontal myoseptum itself. At 48 hpf, expression is restricted along the horizontal myoseptum.</text>
</comment>
<comment type="disruption phenotype">
    <text evidence="5 6">Significant reduction in phosphorylated mapk/erk in the nuclei within the posterior cardinal vein endothelium at 32 hpf (PubMed:28179432). Loss of facial lymphatic vessels including; lateral facial lymphatic vessel, medial facial lymphatic vessel, facial lymphatic branchial arches and otolithic lymphatic vessel at 5 dpf (PubMed:37097004). In a svep1 and ccbe1 double knockout model there is complete loss of the facial lymphatic architecture at 5 dpf (PubMed:37097004).</text>
</comment>
<comment type="similarity">
    <text evidence="7">Belongs to the CCBE1 family.</text>
</comment>
<comment type="sequence caution" evidence="7">
    <conflict type="erroneous initiation">
        <sequence resource="EMBL-CDS" id="AAI54644"/>
    </conflict>
</comment>
<dbReference type="EMBL" id="BC154643">
    <property type="protein sequence ID" value="AAI54644.1"/>
    <property type="status" value="ALT_INIT"/>
    <property type="molecule type" value="mRNA"/>
</dbReference>
<dbReference type="RefSeq" id="NP_001157395.1">
    <property type="nucleotide sequence ID" value="NM_001163923.1"/>
</dbReference>
<dbReference type="FunCoup" id="A8WGB1">
    <property type="interactions" value="1076"/>
</dbReference>
<dbReference type="STRING" id="7955.ENSDARP00000106577"/>
<dbReference type="GlyCosmos" id="A8WGB1">
    <property type="glycosylation" value="1 site, No reported glycans"/>
</dbReference>
<dbReference type="PaxDb" id="7955-ENSDARP00000078551"/>
<dbReference type="Ensembl" id="ENSDART00000127963">
    <property type="protein sequence ID" value="ENSDARP00000106577"/>
    <property type="gene ID" value="ENSDARG00000086158"/>
</dbReference>
<dbReference type="GeneID" id="555629"/>
<dbReference type="KEGG" id="dre:555629"/>
<dbReference type="AGR" id="ZFIN:ZDB-GENE-090506-7"/>
<dbReference type="CTD" id="147372"/>
<dbReference type="ZFIN" id="ZDB-GENE-090506-7">
    <property type="gene designation" value="ccbe1"/>
</dbReference>
<dbReference type="eggNOG" id="KOG1218">
    <property type="taxonomic scope" value="Eukaryota"/>
</dbReference>
<dbReference type="HOGENOM" id="CLU_062964_0_0_1"/>
<dbReference type="InParanoid" id="A8WGB1"/>
<dbReference type="OMA" id="VMKAGTC"/>
<dbReference type="OrthoDB" id="9946071at2759"/>
<dbReference type="PhylomeDB" id="A8WGB1"/>
<dbReference type="PRO" id="PR:A8WGB1"/>
<dbReference type="Proteomes" id="UP000000437">
    <property type="component" value="Chromosome 21"/>
</dbReference>
<dbReference type="Bgee" id="ENSDARG00000086158">
    <property type="expression patterns" value="Expressed in spleen and 30 other cell types or tissues"/>
</dbReference>
<dbReference type="ExpressionAtlas" id="A8WGB1">
    <property type="expression patterns" value="baseline"/>
</dbReference>
<dbReference type="GO" id="GO:0005581">
    <property type="term" value="C:collagen trimer"/>
    <property type="evidence" value="ECO:0007669"/>
    <property type="project" value="UniProtKB-KW"/>
</dbReference>
<dbReference type="GO" id="GO:0005576">
    <property type="term" value="C:extracellular region"/>
    <property type="evidence" value="ECO:0007669"/>
    <property type="project" value="UniProtKB-SubCell"/>
</dbReference>
<dbReference type="GO" id="GO:0005509">
    <property type="term" value="F:calcium ion binding"/>
    <property type="evidence" value="ECO:0007669"/>
    <property type="project" value="InterPro"/>
</dbReference>
<dbReference type="GO" id="GO:0048514">
    <property type="term" value="P:blood vessel morphogenesis"/>
    <property type="evidence" value="ECO:0000316"/>
    <property type="project" value="ZFIN"/>
</dbReference>
<dbReference type="GO" id="GO:0001945">
    <property type="term" value="P:lymph vessel development"/>
    <property type="evidence" value="ECO:0000315"/>
    <property type="project" value="ZFIN"/>
</dbReference>
<dbReference type="GO" id="GO:0001946">
    <property type="term" value="P:lymphangiogenesis"/>
    <property type="evidence" value="ECO:0000315"/>
    <property type="project" value="UniProtKB"/>
</dbReference>
<dbReference type="GO" id="GO:0002040">
    <property type="term" value="P:sprouting angiogenesis"/>
    <property type="evidence" value="ECO:0000315"/>
    <property type="project" value="UniProtKB"/>
</dbReference>
<dbReference type="GO" id="GO:0038084">
    <property type="term" value="P:vascular endothelial growth factor signaling pathway"/>
    <property type="evidence" value="ECO:0000316"/>
    <property type="project" value="ZFIN"/>
</dbReference>
<dbReference type="GO" id="GO:0048845">
    <property type="term" value="P:venous blood vessel morphogenesis"/>
    <property type="evidence" value="ECO:0000315"/>
    <property type="project" value="UniProtKB"/>
</dbReference>
<dbReference type="GO" id="GO:0060855">
    <property type="term" value="P:venous endothelial cell migration involved in lymph vessel development"/>
    <property type="evidence" value="ECO:0000315"/>
    <property type="project" value="ZFIN"/>
</dbReference>
<dbReference type="CDD" id="cd00054">
    <property type="entry name" value="EGF_CA"/>
    <property type="match status" value="1"/>
</dbReference>
<dbReference type="FunFam" id="2.10.25.10:FF:000010">
    <property type="entry name" value="Pro-epidermal growth factor"/>
    <property type="match status" value="1"/>
</dbReference>
<dbReference type="Gene3D" id="2.10.25.10">
    <property type="entry name" value="Laminin"/>
    <property type="match status" value="2"/>
</dbReference>
<dbReference type="InterPro" id="IPR008160">
    <property type="entry name" value="Collagen"/>
</dbReference>
<dbReference type="InterPro" id="IPR001881">
    <property type="entry name" value="EGF-like_Ca-bd_dom"/>
</dbReference>
<dbReference type="InterPro" id="IPR000742">
    <property type="entry name" value="EGF-like_dom"/>
</dbReference>
<dbReference type="InterPro" id="IPR000152">
    <property type="entry name" value="EGF-type_Asp/Asn_hydroxyl_site"/>
</dbReference>
<dbReference type="InterPro" id="IPR018097">
    <property type="entry name" value="EGF_Ca-bd_CS"/>
</dbReference>
<dbReference type="PANTHER" id="PTHR24637">
    <property type="entry name" value="COLLAGEN"/>
    <property type="match status" value="1"/>
</dbReference>
<dbReference type="PANTHER" id="PTHR24637:SF396">
    <property type="entry name" value="COLLAGEN AND CALCIUM BINDING EGF DOMAINS 1"/>
    <property type="match status" value="1"/>
</dbReference>
<dbReference type="Pfam" id="PF01391">
    <property type="entry name" value="Collagen"/>
    <property type="match status" value="1"/>
</dbReference>
<dbReference type="Pfam" id="PF14670">
    <property type="entry name" value="FXa_inhibition"/>
    <property type="match status" value="1"/>
</dbReference>
<dbReference type="SMART" id="SM00181">
    <property type="entry name" value="EGF"/>
    <property type="match status" value="2"/>
</dbReference>
<dbReference type="SMART" id="SM00179">
    <property type="entry name" value="EGF_CA"/>
    <property type="match status" value="2"/>
</dbReference>
<dbReference type="SUPFAM" id="SSF57196">
    <property type="entry name" value="EGF/Laminin"/>
    <property type="match status" value="2"/>
</dbReference>
<dbReference type="PROSITE" id="PS00010">
    <property type="entry name" value="ASX_HYDROXYL"/>
    <property type="match status" value="1"/>
</dbReference>
<dbReference type="PROSITE" id="PS01186">
    <property type="entry name" value="EGF_2"/>
    <property type="match status" value="1"/>
</dbReference>
<dbReference type="PROSITE" id="PS50026">
    <property type="entry name" value="EGF_3"/>
    <property type="match status" value="1"/>
</dbReference>
<dbReference type="PROSITE" id="PS01187">
    <property type="entry name" value="EGF_CA"/>
    <property type="match status" value="1"/>
</dbReference>
<reference key="1">
    <citation type="submission" date="2007-11" db="EMBL/GenBank/DDBJ databases">
        <authorList>
            <consortium name="NIH - Zebrafish Gene Collection (ZGC) project"/>
        </authorList>
    </citation>
    <scope>NUCLEOTIDE SEQUENCE [LARGE SCALE MRNA]</scope>
</reference>
<reference key="2">
    <citation type="journal article" date="2009" name="Nat. Genet.">
        <title>ccbe1 is required for embryonic lymphangiogenesis and venous sprouting.</title>
        <authorList>
            <person name="Hogan B.M."/>
            <person name="Bos F.L."/>
            <person name="Bussmann J."/>
            <person name="Witte M."/>
            <person name="Chi N.C."/>
            <person name="Duckers H.J."/>
            <person name="Schulte-Merker S."/>
        </authorList>
    </citation>
    <scope>FUNCTION</scope>
    <scope>TISSUE SPECIFICITY</scope>
    <scope>DEVELOPMENTAL STAGE</scope>
    <scope>MUTAGENESIS OF ASP-162</scope>
</reference>
<reference key="3">
    <citation type="journal article" date="2017" name="Circ. Res.">
        <title>An Evolutionarily Conserved Role for Polydom/Svep1 During Lymphatic Vessel Formation.</title>
        <authorList>
            <person name="Karpanen T."/>
            <person name="Padberg Y."/>
            <person name="van de Pavert S.A."/>
            <person name="Dierkes C."/>
            <person name="Morooka N."/>
            <person name="Peterson-Maduro J."/>
            <person name="van de Hoek G."/>
            <person name="Adrian M."/>
            <person name="Mochizuki N."/>
            <person name="Sekiguchi K."/>
            <person name="Kiefer F."/>
            <person name="Schulte D."/>
            <person name="Schulte-Merker S."/>
        </authorList>
    </citation>
    <scope>DISRUPTION PHENOTYPE</scope>
</reference>
<reference key="4">
    <citation type="journal article" date="2023" name="Elife">
        <title>Svep1 is a binding ligand of Tie1 and affects specific aspects of facial lymphatic development in a Vegfc-independent manner.</title>
        <authorList>
            <person name="Hussmann M."/>
            <person name="Schulte D."/>
            <person name="Weischer S."/>
            <person name="Carlantoni C."/>
            <person name="Nakajima H."/>
            <person name="Mochizuki N."/>
            <person name="Stainier D.Y.R."/>
            <person name="Zobel T."/>
            <person name="Koch M."/>
            <person name="Schulte-Merker S."/>
        </authorList>
    </citation>
    <scope>FUNCTION</scope>
    <scope>DISRUPTION PHENOTYPE</scope>
</reference>
<protein>
    <recommendedName>
        <fullName>Collagen and calcium-binding EGF domain-containing protein 1</fullName>
    </recommendedName>
    <alternativeName>
        <fullName>Full of fluid protein</fullName>
    </alternativeName>
</protein>